<keyword id="KW-0963">Cytoplasm</keyword>
<keyword id="KW-0413">Isomerase</keyword>
<keyword id="KW-1185">Reference proteome</keyword>
<keyword id="KW-0694">RNA-binding</keyword>
<keyword id="KW-0698">rRNA processing</keyword>
<organism>
    <name type="scientific">Buchnera aphidicola subsp. Acyrthosiphon pisum (strain APS)</name>
    <name type="common">Acyrthosiphon pisum symbiotic bacterium</name>
    <dbReference type="NCBI Taxonomy" id="107806"/>
    <lineage>
        <taxon>Bacteria</taxon>
        <taxon>Pseudomonadati</taxon>
        <taxon>Pseudomonadota</taxon>
        <taxon>Gammaproteobacteria</taxon>
        <taxon>Enterobacterales</taxon>
        <taxon>Erwiniaceae</taxon>
        <taxon>Buchnera</taxon>
    </lineage>
</organism>
<accession>P57481</accession>
<proteinExistence type="inferred from homology"/>
<sequence>MKKIQLNSIASSCSLSGQRLDLVLSKLFREYSRSYLKKLIIMNQVLVNESIVNQPDKKILGGETLTIHPFSKDLLVDIPENIFLDIVYEDSDILIINKPAGLVVHPGSGNKSGTILNALLYHYKNSKDLPRAGIVHRLDKDTSGLMVIAKNIFSYNHLLLLLKEKKIIREYEGIVHGKMIAGGTINKPIMRHYNRRTCMMVHHLGKPSVTHYKVLSRFKFHTHIAIRLETGRTHQIRVHMLHIKYPLVGDPCYSGFKIQSNYRKDKKTNKIYKFPRQALHANHLSLHHPIKKNVMSWTVPLPQDIQELLLKI</sequence>
<name>RLUD_BUCAI</name>
<evidence type="ECO:0000250" key="1"/>
<evidence type="ECO:0000250" key="2">
    <source>
        <dbReference type="UniProtKB" id="P33643"/>
    </source>
</evidence>
<evidence type="ECO:0000255" key="3">
    <source>
        <dbReference type="PROSITE-ProRule" id="PRU00182"/>
    </source>
</evidence>
<evidence type="ECO:0000305" key="4"/>
<dbReference type="EC" id="5.4.99.23" evidence="2"/>
<dbReference type="EMBL" id="BA000003">
    <property type="protein sequence ID" value="BAB13104.1"/>
    <property type="molecule type" value="Genomic_DNA"/>
</dbReference>
<dbReference type="RefSeq" id="NP_240218.1">
    <property type="nucleotide sequence ID" value="NC_002528.1"/>
</dbReference>
<dbReference type="RefSeq" id="WP_009874359.1">
    <property type="nucleotide sequence ID" value="NC_002528.1"/>
</dbReference>
<dbReference type="SMR" id="P57481"/>
<dbReference type="STRING" id="563178.BUAP5A_394"/>
<dbReference type="EnsemblBacteria" id="BAB13104">
    <property type="protein sequence ID" value="BAB13104"/>
    <property type="gene ID" value="BAB13104"/>
</dbReference>
<dbReference type="KEGG" id="buc:BU401"/>
<dbReference type="PATRIC" id="fig|107806.10.peg.415"/>
<dbReference type="eggNOG" id="COG0564">
    <property type="taxonomic scope" value="Bacteria"/>
</dbReference>
<dbReference type="HOGENOM" id="CLU_016902_4_0_6"/>
<dbReference type="Proteomes" id="UP000001806">
    <property type="component" value="Chromosome"/>
</dbReference>
<dbReference type="GO" id="GO:0005737">
    <property type="term" value="C:cytoplasm"/>
    <property type="evidence" value="ECO:0007669"/>
    <property type="project" value="UniProtKB-SubCell"/>
</dbReference>
<dbReference type="GO" id="GO:0160140">
    <property type="term" value="F:23S rRNA pseudouridine(1911/1915/1917) synthase activity"/>
    <property type="evidence" value="ECO:0007669"/>
    <property type="project" value="UniProtKB-EC"/>
</dbReference>
<dbReference type="GO" id="GO:0003723">
    <property type="term" value="F:RNA binding"/>
    <property type="evidence" value="ECO:0007669"/>
    <property type="project" value="UniProtKB-KW"/>
</dbReference>
<dbReference type="GO" id="GO:0000455">
    <property type="term" value="P:enzyme-directed rRNA pseudouridine synthesis"/>
    <property type="evidence" value="ECO:0007669"/>
    <property type="project" value="TreeGrafter"/>
</dbReference>
<dbReference type="CDD" id="cd02869">
    <property type="entry name" value="PseudoU_synth_RluA_like"/>
    <property type="match status" value="1"/>
</dbReference>
<dbReference type="CDD" id="cd00165">
    <property type="entry name" value="S4"/>
    <property type="match status" value="1"/>
</dbReference>
<dbReference type="Gene3D" id="3.30.2350.10">
    <property type="entry name" value="Pseudouridine synthase"/>
    <property type="match status" value="1"/>
</dbReference>
<dbReference type="Gene3D" id="3.10.290.10">
    <property type="entry name" value="RNA-binding S4 domain"/>
    <property type="match status" value="1"/>
</dbReference>
<dbReference type="InterPro" id="IPR020103">
    <property type="entry name" value="PsdUridine_synth_cat_dom_sf"/>
</dbReference>
<dbReference type="InterPro" id="IPR006224">
    <property type="entry name" value="PsdUridine_synth_RluA-like_CS"/>
</dbReference>
<dbReference type="InterPro" id="IPR006225">
    <property type="entry name" value="PsdUridine_synth_RluC/D"/>
</dbReference>
<dbReference type="InterPro" id="IPR006145">
    <property type="entry name" value="PsdUridine_synth_RsuA/RluA"/>
</dbReference>
<dbReference type="InterPro" id="IPR050188">
    <property type="entry name" value="RluA_PseudoU_synthase"/>
</dbReference>
<dbReference type="InterPro" id="IPR002942">
    <property type="entry name" value="S4_RNA-bd"/>
</dbReference>
<dbReference type="InterPro" id="IPR036986">
    <property type="entry name" value="S4_RNA-bd_sf"/>
</dbReference>
<dbReference type="NCBIfam" id="NF008385">
    <property type="entry name" value="PRK11180.1"/>
    <property type="match status" value="1"/>
</dbReference>
<dbReference type="NCBIfam" id="TIGR00005">
    <property type="entry name" value="rluA_subfam"/>
    <property type="match status" value="1"/>
</dbReference>
<dbReference type="PANTHER" id="PTHR21600">
    <property type="entry name" value="MITOCHONDRIAL RNA PSEUDOURIDINE SYNTHASE"/>
    <property type="match status" value="1"/>
</dbReference>
<dbReference type="PANTHER" id="PTHR21600:SF44">
    <property type="entry name" value="RIBOSOMAL LARGE SUBUNIT PSEUDOURIDINE SYNTHASE D"/>
    <property type="match status" value="1"/>
</dbReference>
<dbReference type="Pfam" id="PF00849">
    <property type="entry name" value="PseudoU_synth_2"/>
    <property type="match status" value="1"/>
</dbReference>
<dbReference type="Pfam" id="PF01479">
    <property type="entry name" value="S4"/>
    <property type="match status" value="1"/>
</dbReference>
<dbReference type="SMART" id="SM00363">
    <property type="entry name" value="S4"/>
    <property type="match status" value="1"/>
</dbReference>
<dbReference type="SUPFAM" id="SSF55174">
    <property type="entry name" value="Alpha-L RNA-binding motif"/>
    <property type="match status" value="1"/>
</dbReference>
<dbReference type="SUPFAM" id="SSF55120">
    <property type="entry name" value="Pseudouridine synthase"/>
    <property type="match status" value="1"/>
</dbReference>
<dbReference type="PROSITE" id="PS01129">
    <property type="entry name" value="PSI_RLU"/>
    <property type="match status" value="1"/>
</dbReference>
<dbReference type="PROSITE" id="PS50889">
    <property type="entry name" value="S4"/>
    <property type="match status" value="1"/>
</dbReference>
<reference key="1">
    <citation type="journal article" date="2000" name="Nature">
        <title>Genome sequence of the endocellular bacterial symbiont of aphids Buchnera sp. APS.</title>
        <authorList>
            <person name="Shigenobu S."/>
            <person name="Watanabe H."/>
            <person name="Hattori M."/>
            <person name="Sakaki Y."/>
            <person name="Ishikawa H."/>
        </authorList>
    </citation>
    <scope>NUCLEOTIDE SEQUENCE [LARGE SCALE GENOMIC DNA]</scope>
    <source>
        <strain>APS</strain>
    </source>
</reference>
<feature type="chain" id="PRO_0000162684" description="Ribosomal large subunit pseudouridine synthase D">
    <location>
        <begin position="1"/>
        <end position="312"/>
    </location>
</feature>
<feature type="domain" description="S4 RNA-binding" evidence="3">
    <location>
        <begin position="18"/>
        <end position="87"/>
    </location>
</feature>
<feature type="active site" evidence="1">
    <location>
        <position position="139"/>
    </location>
</feature>
<protein>
    <recommendedName>
        <fullName evidence="2">Ribosomal large subunit pseudouridine synthase D</fullName>
        <ecNumber evidence="2">5.4.99.23</ecNumber>
    </recommendedName>
    <alternativeName>
        <fullName>23S rRNA pseudouridine(1911/1915/1917) synthase</fullName>
    </alternativeName>
    <alternativeName>
        <fullName>rRNA pseudouridylate synthase D</fullName>
    </alternativeName>
    <alternativeName>
        <fullName>rRNA-uridine isomerase D</fullName>
    </alternativeName>
</protein>
<comment type="function">
    <text evidence="2">Responsible for synthesis of pseudouridine from uracil at positions 1911, 1915 and 1917 in 23S ribosomal RNA.</text>
</comment>
<comment type="catalytic activity">
    <reaction evidence="2">
        <text>uridine(1911/1915/1917) in 23S rRNA = pseudouridine(1911/1915/1917) in 23S rRNA</text>
        <dbReference type="Rhea" id="RHEA:42524"/>
        <dbReference type="Rhea" id="RHEA-COMP:10097"/>
        <dbReference type="Rhea" id="RHEA-COMP:10098"/>
        <dbReference type="ChEBI" id="CHEBI:65314"/>
        <dbReference type="ChEBI" id="CHEBI:65315"/>
        <dbReference type="EC" id="5.4.99.23"/>
    </reaction>
</comment>
<comment type="subcellular location">
    <subcellularLocation>
        <location evidence="2">Cytoplasm</location>
    </subcellularLocation>
    <text evidence="2">Associates with late stage pre-50S ribosomal subunits.</text>
</comment>
<comment type="similarity">
    <text evidence="4">Belongs to the pseudouridine synthase RluA family.</text>
</comment>
<gene>
    <name type="primary">rluD</name>
    <name type="ordered locus">BU401</name>
</gene>